<proteinExistence type="inferred from homology"/>
<keyword id="KW-0963">Cytoplasm</keyword>
<keyword id="KW-0489">Methyltransferase</keyword>
<keyword id="KW-0698">rRNA processing</keyword>
<keyword id="KW-0949">S-adenosyl-L-methionine</keyword>
<keyword id="KW-0808">Transferase</keyword>
<gene>
    <name evidence="1" type="primary">rsmH</name>
    <name type="synonym">mraW</name>
    <name type="ordered locus">PMT9312_0173</name>
</gene>
<reference key="1">
    <citation type="journal article" date="2006" name="Science">
        <title>Genomic islands and the ecology and evolution of Prochlorococcus.</title>
        <authorList>
            <person name="Coleman M.L."/>
            <person name="Sullivan M.B."/>
            <person name="Martiny A.C."/>
            <person name="Steglich C."/>
            <person name="Barry K."/>
            <person name="Delong E.F."/>
            <person name="Chisholm S.W."/>
        </authorList>
    </citation>
    <scope>NUCLEOTIDE SEQUENCE [LARGE SCALE GENOMIC DNA]</scope>
    <source>
        <strain>MIT 9312</strain>
    </source>
</reference>
<accession>Q31D10</accession>
<organism>
    <name type="scientific">Prochlorococcus marinus (strain MIT 9312)</name>
    <dbReference type="NCBI Taxonomy" id="74546"/>
    <lineage>
        <taxon>Bacteria</taxon>
        <taxon>Bacillati</taxon>
        <taxon>Cyanobacteriota</taxon>
        <taxon>Cyanophyceae</taxon>
        <taxon>Synechococcales</taxon>
        <taxon>Prochlorococcaceae</taxon>
        <taxon>Prochlorococcus</taxon>
    </lineage>
</organism>
<evidence type="ECO:0000255" key="1">
    <source>
        <dbReference type="HAMAP-Rule" id="MF_01007"/>
    </source>
</evidence>
<dbReference type="EC" id="2.1.1.199" evidence="1"/>
<dbReference type="EMBL" id="CP000111">
    <property type="protein sequence ID" value="ABB49235.1"/>
    <property type="molecule type" value="Genomic_DNA"/>
</dbReference>
<dbReference type="RefSeq" id="WP_011375739.1">
    <property type="nucleotide sequence ID" value="NC_007577.1"/>
</dbReference>
<dbReference type="SMR" id="Q31D10"/>
<dbReference type="STRING" id="74546.PMT9312_0173"/>
<dbReference type="KEGG" id="pmi:PMT9312_0173"/>
<dbReference type="eggNOG" id="COG0275">
    <property type="taxonomic scope" value="Bacteria"/>
</dbReference>
<dbReference type="HOGENOM" id="CLU_038422_3_0_3"/>
<dbReference type="OrthoDB" id="9806637at2"/>
<dbReference type="Proteomes" id="UP000002715">
    <property type="component" value="Chromosome"/>
</dbReference>
<dbReference type="GO" id="GO:0005737">
    <property type="term" value="C:cytoplasm"/>
    <property type="evidence" value="ECO:0007669"/>
    <property type="project" value="UniProtKB-SubCell"/>
</dbReference>
<dbReference type="GO" id="GO:0071424">
    <property type="term" value="F:rRNA (cytosine-N4-)-methyltransferase activity"/>
    <property type="evidence" value="ECO:0007669"/>
    <property type="project" value="UniProtKB-UniRule"/>
</dbReference>
<dbReference type="GO" id="GO:0070475">
    <property type="term" value="P:rRNA base methylation"/>
    <property type="evidence" value="ECO:0007669"/>
    <property type="project" value="UniProtKB-UniRule"/>
</dbReference>
<dbReference type="CDD" id="cd02440">
    <property type="entry name" value="AdoMet_MTases"/>
    <property type="match status" value="1"/>
</dbReference>
<dbReference type="Gene3D" id="1.10.150.170">
    <property type="entry name" value="Putative methyltransferase TM0872, insert domain"/>
    <property type="match status" value="1"/>
</dbReference>
<dbReference type="Gene3D" id="3.40.50.150">
    <property type="entry name" value="Vaccinia Virus protein VP39"/>
    <property type="match status" value="1"/>
</dbReference>
<dbReference type="HAMAP" id="MF_01007">
    <property type="entry name" value="16SrRNA_methyltr_H"/>
    <property type="match status" value="1"/>
</dbReference>
<dbReference type="InterPro" id="IPR002903">
    <property type="entry name" value="RsmH"/>
</dbReference>
<dbReference type="InterPro" id="IPR023397">
    <property type="entry name" value="SAM-dep_MeTrfase_MraW_recog"/>
</dbReference>
<dbReference type="InterPro" id="IPR029063">
    <property type="entry name" value="SAM-dependent_MTases_sf"/>
</dbReference>
<dbReference type="NCBIfam" id="TIGR00006">
    <property type="entry name" value="16S rRNA (cytosine(1402)-N(4))-methyltransferase RsmH"/>
    <property type="match status" value="1"/>
</dbReference>
<dbReference type="PANTHER" id="PTHR11265:SF0">
    <property type="entry name" value="12S RRNA N4-METHYLCYTIDINE METHYLTRANSFERASE"/>
    <property type="match status" value="1"/>
</dbReference>
<dbReference type="PANTHER" id="PTHR11265">
    <property type="entry name" value="S-ADENOSYL-METHYLTRANSFERASE MRAW"/>
    <property type="match status" value="1"/>
</dbReference>
<dbReference type="Pfam" id="PF01795">
    <property type="entry name" value="Methyltransf_5"/>
    <property type="match status" value="1"/>
</dbReference>
<dbReference type="PIRSF" id="PIRSF004486">
    <property type="entry name" value="MraW"/>
    <property type="match status" value="1"/>
</dbReference>
<dbReference type="SUPFAM" id="SSF81799">
    <property type="entry name" value="Putative methyltransferase TM0872, insert domain"/>
    <property type="match status" value="1"/>
</dbReference>
<dbReference type="SUPFAM" id="SSF53335">
    <property type="entry name" value="S-adenosyl-L-methionine-dependent methyltransferases"/>
    <property type="match status" value="1"/>
</dbReference>
<feature type="chain" id="PRO_0000387042" description="Ribosomal RNA small subunit methyltransferase H">
    <location>
        <begin position="1"/>
        <end position="300"/>
    </location>
</feature>
<feature type="binding site" evidence="1">
    <location>
        <begin position="46"/>
        <end position="48"/>
    </location>
    <ligand>
        <name>S-adenosyl-L-methionine</name>
        <dbReference type="ChEBI" id="CHEBI:59789"/>
    </ligand>
</feature>
<feature type="binding site" evidence="1">
    <location>
        <position position="65"/>
    </location>
    <ligand>
        <name>S-adenosyl-L-methionine</name>
        <dbReference type="ChEBI" id="CHEBI:59789"/>
    </ligand>
</feature>
<feature type="binding site" evidence="1">
    <location>
        <position position="92"/>
    </location>
    <ligand>
        <name>S-adenosyl-L-methionine</name>
        <dbReference type="ChEBI" id="CHEBI:59789"/>
    </ligand>
</feature>
<feature type="binding site" evidence="1">
    <location>
        <position position="107"/>
    </location>
    <ligand>
        <name>S-adenosyl-L-methionine</name>
        <dbReference type="ChEBI" id="CHEBI:59789"/>
    </ligand>
</feature>
<feature type="binding site" evidence="1">
    <location>
        <position position="114"/>
    </location>
    <ligand>
        <name>S-adenosyl-L-methionine</name>
        <dbReference type="ChEBI" id="CHEBI:59789"/>
    </ligand>
</feature>
<protein>
    <recommendedName>
        <fullName evidence="1">Ribosomal RNA small subunit methyltransferase H</fullName>
        <ecNumber evidence="1">2.1.1.199</ecNumber>
    </recommendedName>
    <alternativeName>
        <fullName evidence="1">16S rRNA m(4)C1402 methyltransferase</fullName>
    </alternativeName>
    <alternativeName>
        <fullName evidence="1">rRNA (cytosine-N(4)-)-methyltransferase RsmH</fullName>
    </alternativeName>
</protein>
<sequence>MQTDLSDSSFFNHKSVMTDEILASLEHYPLIHNNQLKGIDATLGGGGHSYHLLRKYSDLHIIGLDQDPFARKSASKKLDEFKNRIDIRAANFADFEPKEKVSFVIADLGVNSNQIDDPKRGFSFQKDGPLDMRMNPFLEVDAEKLIETLQEKDLANLIYKYGDERLSRKIARKIKMDLKVNGKYSGTKELAYSIAGCFPPKQRYKKIHPATRTFQALRIAVNKEIEVLEKFLQIVPDWLLPGGIISIISFHSLEDRLVKSSFKNDQRLKNLTKKPITPSEQEVEINKRARSGKLRVAQLN</sequence>
<name>RSMH_PROM9</name>
<comment type="function">
    <text evidence="1">Specifically methylates the N4 position of cytidine in position 1402 (C1402) of 16S rRNA.</text>
</comment>
<comment type="catalytic activity">
    <reaction evidence="1">
        <text>cytidine(1402) in 16S rRNA + S-adenosyl-L-methionine = N(4)-methylcytidine(1402) in 16S rRNA + S-adenosyl-L-homocysteine + H(+)</text>
        <dbReference type="Rhea" id="RHEA:42928"/>
        <dbReference type="Rhea" id="RHEA-COMP:10286"/>
        <dbReference type="Rhea" id="RHEA-COMP:10287"/>
        <dbReference type="ChEBI" id="CHEBI:15378"/>
        <dbReference type="ChEBI" id="CHEBI:57856"/>
        <dbReference type="ChEBI" id="CHEBI:59789"/>
        <dbReference type="ChEBI" id="CHEBI:74506"/>
        <dbReference type="ChEBI" id="CHEBI:82748"/>
        <dbReference type="EC" id="2.1.1.199"/>
    </reaction>
</comment>
<comment type="subcellular location">
    <subcellularLocation>
        <location evidence="1">Cytoplasm</location>
    </subcellularLocation>
</comment>
<comment type="similarity">
    <text evidence="1">Belongs to the methyltransferase superfamily. RsmH family.</text>
</comment>